<feature type="chain" id="PRO_1000197190" description="Glycine--tRNA ligase alpha subunit">
    <location>
        <begin position="1"/>
        <end position="303"/>
    </location>
</feature>
<reference key="1">
    <citation type="journal article" date="2009" name="PLoS Genet.">
        <title>Organised genome dynamics in the Escherichia coli species results in highly diverse adaptive paths.</title>
        <authorList>
            <person name="Touchon M."/>
            <person name="Hoede C."/>
            <person name="Tenaillon O."/>
            <person name="Barbe V."/>
            <person name="Baeriswyl S."/>
            <person name="Bidet P."/>
            <person name="Bingen E."/>
            <person name="Bonacorsi S."/>
            <person name="Bouchier C."/>
            <person name="Bouvet O."/>
            <person name="Calteau A."/>
            <person name="Chiapello H."/>
            <person name="Clermont O."/>
            <person name="Cruveiller S."/>
            <person name="Danchin A."/>
            <person name="Diard M."/>
            <person name="Dossat C."/>
            <person name="Karoui M.E."/>
            <person name="Frapy E."/>
            <person name="Garry L."/>
            <person name="Ghigo J.M."/>
            <person name="Gilles A.M."/>
            <person name="Johnson J."/>
            <person name="Le Bouguenec C."/>
            <person name="Lescat M."/>
            <person name="Mangenot S."/>
            <person name="Martinez-Jehanne V."/>
            <person name="Matic I."/>
            <person name="Nassif X."/>
            <person name="Oztas S."/>
            <person name="Petit M.A."/>
            <person name="Pichon C."/>
            <person name="Rouy Z."/>
            <person name="Ruf C.S."/>
            <person name="Schneider D."/>
            <person name="Tourret J."/>
            <person name="Vacherie B."/>
            <person name="Vallenet D."/>
            <person name="Medigue C."/>
            <person name="Rocha E.P.C."/>
            <person name="Denamur E."/>
        </authorList>
    </citation>
    <scope>NUCLEOTIDE SEQUENCE [LARGE SCALE GENOMIC DNA]</scope>
    <source>
        <strain>UMN026 / ExPEC</strain>
    </source>
</reference>
<protein>
    <recommendedName>
        <fullName evidence="1">Glycine--tRNA ligase alpha subunit</fullName>
        <ecNumber evidence="1">6.1.1.14</ecNumber>
    </recommendedName>
    <alternativeName>
        <fullName evidence="1">Glycyl-tRNA synthetase alpha subunit</fullName>
        <shortName evidence="1">GlyRS</shortName>
    </alternativeName>
</protein>
<accession>B7NEL1</accession>
<evidence type="ECO:0000255" key="1">
    <source>
        <dbReference type="HAMAP-Rule" id="MF_00254"/>
    </source>
</evidence>
<keyword id="KW-0030">Aminoacyl-tRNA synthetase</keyword>
<keyword id="KW-0067">ATP-binding</keyword>
<keyword id="KW-0963">Cytoplasm</keyword>
<keyword id="KW-0436">Ligase</keyword>
<keyword id="KW-0547">Nucleotide-binding</keyword>
<keyword id="KW-0648">Protein biosynthesis</keyword>
<gene>
    <name evidence="1" type="primary">glyQ</name>
    <name type="ordered locus">ECUMN_4070</name>
</gene>
<organism>
    <name type="scientific">Escherichia coli O17:K52:H18 (strain UMN026 / ExPEC)</name>
    <dbReference type="NCBI Taxonomy" id="585056"/>
    <lineage>
        <taxon>Bacteria</taxon>
        <taxon>Pseudomonadati</taxon>
        <taxon>Pseudomonadota</taxon>
        <taxon>Gammaproteobacteria</taxon>
        <taxon>Enterobacterales</taxon>
        <taxon>Enterobacteriaceae</taxon>
        <taxon>Escherichia</taxon>
    </lineage>
</organism>
<proteinExistence type="inferred from homology"/>
<sequence length="303" mass="34716">MQKFDTRTFQGLILTLQDYWARQGCTIVQPLDMEVGAGTSHPMTCLRALGPEPMAAAYVQPSRRPTDGRYGENPNRLQHYYQFQVVIKPSPDNIQELYLGSLKELGMDPTIHDIRFVEDNWENPTLGAWGLGWEVWLNGMEVTQFTYFQQVGGLECKPVTGEITYGLERLAMYIQGVDSVYDLVWSDGPLGKTTYGDVFHQNEVEQSTYNFEYADVDFLFTCFEQYEKEAQQLLALENPLPLPAYERILKAAHSFNLLDARKAISVTERQRYILRIRTLTKAVAEAYYASREALGFPMCNKDK</sequence>
<name>SYGA_ECOLU</name>
<dbReference type="EC" id="6.1.1.14" evidence="1"/>
<dbReference type="EMBL" id="CU928163">
    <property type="protein sequence ID" value="CAR15212.1"/>
    <property type="molecule type" value="Genomic_DNA"/>
</dbReference>
<dbReference type="RefSeq" id="WP_001168544.1">
    <property type="nucleotide sequence ID" value="NC_011751.1"/>
</dbReference>
<dbReference type="RefSeq" id="YP_002414712.1">
    <property type="nucleotide sequence ID" value="NC_011751.1"/>
</dbReference>
<dbReference type="SMR" id="B7NEL1"/>
<dbReference type="STRING" id="585056.ECUMN_4070"/>
<dbReference type="GeneID" id="93778290"/>
<dbReference type="KEGG" id="eum:ECUMN_4070"/>
<dbReference type="PATRIC" id="fig|585056.7.peg.4245"/>
<dbReference type="HOGENOM" id="CLU_057066_1_0_6"/>
<dbReference type="Proteomes" id="UP000007097">
    <property type="component" value="Chromosome"/>
</dbReference>
<dbReference type="GO" id="GO:0005829">
    <property type="term" value="C:cytosol"/>
    <property type="evidence" value="ECO:0007669"/>
    <property type="project" value="TreeGrafter"/>
</dbReference>
<dbReference type="GO" id="GO:0005524">
    <property type="term" value="F:ATP binding"/>
    <property type="evidence" value="ECO:0007669"/>
    <property type="project" value="UniProtKB-UniRule"/>
</dbReference>
<dbReference type="GO" id="GO:0004820">
    <property type="term" value="F:glycine-tRNA ligase activity"/>
    <property type="evidence" value="ECO:0007669"/>
    <property type="project" value="UniProtKB-UniRule"/>
</dbReference>
<dbReference type="GO" id="GO:0006426">
    <property type="term" value="P:glycyl-tRNA aminoacylation"/>
    <property type="evidence" value="ECO:0007669"/>
    <property type="project" value="UniProtKB-UniRule"/>
</dbReference>
<dbReference type="CDD" id="cd00733">
    <property type="entry name" value="GlyRS_alpha_core"/>
    <property type="match status" value="1"/>
</dbReference>
<dbReference type="FunFam" id="1.20.58.180:FF:000001">
    <property type="entry name" value="Glycine--tRNA ligase alpha subunit"/>
    <property type="match status" value="1"/>
</dbReference>
<dbReference type="FunFam" id="3.30.930.10:FF:000006">
    <property type="entry name" value="Glycine--tRNA ligase alpha subunit"/>
    <property type="match status" value="1"/>
</dbReference>
<dbReference type="Gene3D" id="3.30.930.10">
    <property type="entry name" value="Bira Bifunctional Protein, Domain 2"/>
    <property type="match status" value="1"/>
</dbReference>
<dbReference type="Gene3D" id="1.20.58.180">
    <property type="entry name" value="Class II aaRS and biotin synthetases, domain 2"/>
    <property type="match status" value="1"/>
</dbReference>
<dbReference type="HAMAP" id="MF_00254">
    <property type="entry name" value="Gly_tRNA_synth_alpha"/>
    <property type="match status" value="1"/>
</dbReference>
<dbReference type="InterPro" id="IPR045864">
    <property type="entry name" value="aa-tRNA-synth_II/BPL/LPL"/>
</dbReference>
<dbReference type="InterPro" id="IPR006194">
    <property type="entry name" value="Gly-tRNA-synth_heterodimer"/>
</dbReference>
<dbReference type="InterPro" id="IPR002310">
    <property type="entry name" value="Gly-tRNA_ligase_asu"/>
</dbReference>
<dbReference type="NCBIfam" id="TIGR00388">
    <property type="entry name" value="glyQ"/>
    <property type="match status" value="1"/>
</dbReference>
<dbReference type="NCBIfam" id="NF006827">
    <property type="entry name" value="PRK09348.1"/>
    <property type="match status" value="1"/>
</dbReference>
<dbReference type="PANTHER" id="PTHR30075:SF2">
    <property type="entry name" value="GLYCINE--TRNA LIGASE, CHLOROPLASTIC_MITOCHONDRIAL 2"/>
    <property type="match status" value="1"/>
</dbReference>
<dbReference type="PANTHER" id="PTHR30075">
    <property type="entry name" value="GLYCYL-TRNA SYNTHETASE"/>
    <property type="match status" value="1"/>
</dbReference>
<dbReference type="Pfam" id="PF02091">
    <property type="entry name" value="tRNA-synt_2e"/>
    <property type="match status" value="1"/>
</dbReference>
<dbReference type="PRINTS" id="PR01044">
    <property type="entry name" value="TRNASYNTHGA"/>
</dbReference>
<dbReference type="SUPFAM" id="SSF55681">
    <property type="entry name" value="Class II aaRS and biotin synthetases"/>
    <property type="match status" value="1"/>
</dbReference>
<dbReference type="PROSITE" id="PS50861">
    <property type="entry name" value="AA_TRNA_LIGASE_II_GLYAB"/>
    <property type="match status" value="1"/>
</dbReference>
<comment type="catalytic activity">
    <reaction evidence="1">
        <text>tRNA(Gly) + glycine + ATP = glycyl-tRNA(Gly) + AMP + diphosphate</text>
        <dbReference type="Rhea" id="RHEA:16013"/>
        <dbReference type="Rhea" id="RHEA-COMP:9664"/>
        <dbReference type="Rhea" id="RHEA-COMP:9683"/>
        <dbReference type="ChEBI" id="CHEBI:30616"/>
        <dbReference type="ChEBI" id="CHEBI:33019"/>
        <dbReference type="ChEBI" id="CHEBI:57305"/>
        <dbReference type="ChEBI" id="CHEBI:78442"/>
        <dbReference type="ChEBI" id="CHEBI:78522"/>
        <dbReference type="ChEBI" id="CHEBI:456215"/>
        <dbReference type="EC" id="6.1.1.14"/>
    </reaction>
</comment>
<comment type="subunit">
    <text evidence="1">Tetramer of two alpha and two beta subunits.</text>
</comment>
<comment type="subcellular location">
    <subcellularLocation>
        <location evidence="1">Cytoplasm</location>
    </subcellularLocation>
</comment>
<comment type="similarity">
    <text evidence="1">Belongs to the class-II aminoacyl-tRNA synthetase family.</text>
</comment>